<accession>P48916</accession>
<geneLocation type="mitochondrion"/>
<proteinExistence type="inferred from homology"/>
<keyword id="KW-0249">Electron transport</keyword>
<keyword id="KW-0472">Membrane</keyword>
<keyword id="KW-0496">Mitochondrion</keyword>
<keyword id="KW-0999">Mitochondrion inner membrane</keyword>
<keyword id="KW-0520">NAD</keyword>
<keyword id="KW-1185">Reference proteome</keyword>
<keyword id="KW-0679">Respiratory chain</keyword>
<keyword id="KW-1278">Translocase</keyword>
<keyword id="KW-0812">Transmembrane</keyword>
<keyword id="KW-1133">Transmembrane helix</keyword>
<keyword id="KW-0813">Transport</keyword>
<keyword id="KW-0830">Ubiquinone</keyword>
<evidence type="ECO:0000250" key="1">
    <source>
        <dbReference type="UniProtKB" id="P03905"/>
    </source>
</evidence>
<evidence type="ECO:0000250" key="2">
    <source>
        <dbReference type="UniProtKB" id="P03910"/>
    </source>
</evidence>
<evidence type="ECO:0000255" key="3"/>
<evidence type="ECO:0000305" key="4"/>
<evidence type="ECO:0000312" key="5">
    <source>
        <dbReference type="Proteomes" id="UP000011712"/>
    </source>
</evidence>
<dbReference type="EC" id="7.1.1.2" evidence="1"/>
<dbReference type="EMBL" id="U20753">
    <property type="protein sequence ID" value="AAC48578.1"/>
    <property type="molecule type" value="Genomic_DNA"/>
</dbReference>
<dbReference type="PIR" id="T11411">
    <property type="entry name" value="T11411"/>
</dbReference>
<dbReference type="RefSeq" id="NP_008260.1">
    <property type="nucleotide sequence ID" value="NC_001700.1"/>
</dbReference>
<dbReference type="SMR" id="P48916"/>
<dbReference type="FunCoup" id="P48916">
    <property type="interactions" value="12"/>
</dbReference>
<dbReference type="STRING" id="9685.ENSFCAP00000025718"/>
<dbReference type="PaxDb" id="9685-ENSFCAP00000025718"/>
<dbReference type="Ensembl" id="ENSFCAT00000032655.1">
    <property type="protein sequence ID" value="ENSFCAP00000025718.1"/>
    <property type="gene ID" value="ENSFCAG00000032070.1"/>
</dbReference>
<dbReference type="GeneID" id="807928"/>
<dbReference type="KEGG" id="fca:807928"/>
<dbReference type="CTD" id="4538"/>
<dbReference type="VGNC" id="VGNC:80936">
    <property type="gene designation" value="MT-ND4"/>
</dbReference>
<dbReference type="eggNOG" id="KOG4845">
    <property type="taxonomic scope" value="Eukaryota"/>
</dbReference>
<dbReference type="GeneTree" id="ENSGT00730000111316"/>
<dbReference type="HOGENOM" id="CLU_007100_4_0_1"/>
<dbReference type="InParanoid" id="P48916"/>
<dbReference type="OMA" id="ITRWGNQ"/>
<dbReference type="OrthoDB" id="564260at2759"/>
<dbReference type="Proteomes" id="UP000011712">
    <property type="component" value="Mitochondrion"/>
</dbReference>
<dbReference type="Bgee" id="ENSFCAG00000032070">
    <property type="expression patterns" value="Expressed in uterus and 9 other cell types or tissues"/>
</dbReference>
<dbReference type="GO" id="GO:0005743">
    <property type="term" value="C:mitochondrial inner membrane"/>
    <property type="evidence" value="ECO:0000250"/>
    <property type="project" value="UniProtKB"/>
</dbReference>
<dbReference type="GO" id="GO:0045271">
    <property type="term" value="C:respiratory chain complex I"/>
    <property type="evidence" value="ECO:0000318"/>
    <property type="project" value="GO_Central"/>
</dbReference>
<dbReference type="GO" id="GO:0008137">
    <property type="term" value="F:NADH dehydrogenase (ubiquinone) activity"/>
    <property type="evidence" value="ECO:0000250"/>
    <property type="project" value="UniProtKB"/>
</dbReference>
<dbReference type="GO" id="GO:0048039">
    <property type="term" value="F:ubiquinone binding"/>
    <property type="evidence" value="ECO:0000318"/>
    <property type="project" value="GO_Central"/>
</dbReference>
<dbReference type="GO" id="GO:0009060">
    <property type="term" value="P:aerobic respiration"/>
    <property type="evidence" value="ECO:0000318"/>
    <property type="project" value="GO_Central"/>
</dbReference>
<dbReference type="GO" id="GO:0015990">
    <property type="term" value="P:electron transport coupled proton transport"/>
    <property type="evidence" value="ECO:0000318"/>
    <property type="project" value="GO_Central"/>
</dbReference>
<dbReference type="GO" id="GO:0006120">
    <property type="term" value="P:mitochondrial electron transport, NADH to ubiquinone"/>
    <property type="evidence" value="ECO:0000250"/>
    <property type="project" value="UniProtKB"/>
</dbReference>
<dbReference type="GO" id="GO:0032981">
    <property type="term" value="P:mitochondrial respiratory chain complex I assembly"/>
    <property type="evidence" value="ECO:0000250"/>
    <property type="project" value="UniProtKB"/>
</dbReference>
<dbReference type="InterPro" id="IPR000260">
    <property type="entry name" value="NADH4_N"/>
</dbReference>
<dbReference type="InterPro" id="IPR010227">
    <property type="entry name" value="NADH_Q_OxRdtase_chainM/4"/>
</dbReference>
<dbReference type="InterPro" id="IPR003918">
    <property type="entry name" value="NADH_UbQ_OxRdtase"/>
</dbReference>
<dbReference type="InterPro" id="IPR001750">
    <property type="entry name" value="ND/Mrp_TM"/>
</dbReference>
<dbReference type="NCBIfam" id="TIGR01972">
    <property type="entry name" value="NDH_I_M"/>
    <property type="match status" value="1"/>
</dbReference>
<dbReference type="PANTHER" id="PTHR43507">
    <property type="entry name" value="NADH-UBIQUINONE OXIDOREDUCTASE CHAIN 4"/>
    <property type="match status" value="1"/>
</dbReference>
<dbReference type="PANTHER" id="PTHR43507:SF20">
    <property type="entry name" value="NADH-UBIQUINONE OXIDOREDUCTASE CHAIN 4"/>
    <property type="match status" value="1"/>
</dbReference>
<dbReference type="Pfam" id="PF01059">
    <property type="entry name" value="Oxidored_q5_N"/>
    <property type="match status" value="1"/>
</dbReference>
<dbReference type="Pfam" id="PF00361">
    <property type="entry name" value="Proton_antipo_M"/>
    <property type="match status" value="1"/>
</dbReference>
<dbReference type="PRINTS" id="PR01437">
    <property type="entry name" value="NUOXDRDTASE4"/>
</dbReference>
<name>NU4M_FELCA</name>
<organism>
    <name type="scientific">Felis catus</name>
    <name type="common">Cat</name>
    <name type="synonym">Felis silvestris catus</name>
    <dbReference type="NCBI Taxonomy" id="9685"/>
    <lineage>
        <taxon>Eukaryota</taxon>
        <taxon>Metazoa</taxon>
        <taxon>Chordata</taxon>
        <taxon>Craniata</taxon>
        <taxon>Vertebrata</taxon>
        <taxon>Euteleostomi</taxon>
        <taxon>Mammalia</taxon>
        <taxon>Eutheria</taxon>
        <taxon>Laurasiatheria</taxon>
        <taxon>Carnivora</taxon>
        <taxon>Feliformia</taxon>
        <taxon>Felidae</taxon>
        <taxon>Felinae</taxon>
        <taxon>Felis</taxon>
    </lineage>
</organism>
<comment type="function">
    <text evidence="1">Core subunit of the mitochondrial membrane respiratory chain NADH dehydrogenase (Complex I) which catalyzes electron transfer from NADH through the respiratory chain, using ubiquinone as an electron acceptor. Essential for the catalytic activity and assembly of complex I.</text>
</comment>
<comment type="catalytic activity">
    <reaction evidence="1">
        <text>a ubiquinone + NADH + 5 H(+)(in) = a ubiquinol + NAD(+) + 4 H(+)(out)</text>
        <dbReference type="Rhea" id="RHEA:29091"/>
        <dbReference type="Rhea" id="RHEA-COMP:9565"/>
        <dbReference type="Rhea" id="RHEA-COMP:9566"/>
        <dbReference type="ChEBI" id="CHEBI:15378"/>
        <dbReference type="ChEBI" id="CHEBI:16389"/>
        <dbReference type="ChEBI" id="CHEBI:17976"/>
        <dbReference type="ChEBI" id="CHEBI:57540"/>
        <dbReference type="ChEBI" id="CHEBI:57945"/>
        <dbReference type="EC" id="7.1.1.2"/>
    </reaction>
</comment>
<comment type="subunit">
    <text evidence="2">Core subunit of respiratory chain NADH dehydrogenase (Complex I) which is composed of 45 different subunits.</text>
</comment>
<comment type="subcellular location">
    <subcellularLocation>
        <location evidence="2">Mitochondrion inner membrane</location>
        <topology evidence="3">Multi-pass membrane protein</topology>
    </subcellularLocation>
</comment>
<comment type="similarity">
    <text evidence="4">Belongs to the complex I subunit 4 family.</text>
</comment>
<feature type="chain" id="PRO_0000117935" description="NADH-ubiquinone oxidoreductase chain 4">
    <location>
        <begin position="1"/>
        <end position="459"/>
    </location>
</feature>
<feature type="transmembrane region" description="Helical" evidence="3">
    <location>
        <begin position="22"/>
        <end position="42"/>
    </location>
</feature>
<feature type="transmembrane region" description="Helical" evidence="3">
    <location>
        <begin position="60"/>
        <end position="80"/>
    </location>
</feature>
<feature type="transmembrane region" description="Helical" evidence="3">
    <location>
        <begin position="92"/>
        <end position="112"/>
    </location>
</feature>
<feature type="transmembrane region" description="Helical" evidence="3">
    <location>
        <begin position="113"/>
        <end position="133"/>
    </location>
</feature>
<feature type="transmembrane region" description="Helical" evidence="3">
    <location>
        <begin position="147"/>
        <end position="167"/>
    </location>
</feature>
<feature type="transmembrane region" description="Helical" evidence="3">
    <location>
        <begin position="193"/>
        <end position="213"/>
    </location>
</feature>
<feature type="transmembrane region" description="Helical" evidence="3">
    <location>
        <begin position="224"/>
        <end position="244"/>
    </location>
</feature>
<feature type="transmembrane region" description="Helical" evidence="3">
    <location>
        <begin position="257"/>
        <end position="277"/>
    </location>
</feature>
<feature type="transmembrane region" description="Helical" evidence="3">
    <location>
        <begin position="284"/>
        <end position="303"/>
    </location>
</feature>
<feature type="transmembrane region" description="Helical" evidence="3">
    <location>
        <begin position="308"/>
        <end position="330"/>
    </location>
</feature>
<feature type="transmembrane region" description="Helical" evidence="3">
    <location>
        <begin position="351"/>
        <end position="371"/>
    </location>
</feature>
<feature type="transmembrane region" description="Helical" evidence="3">
    <location>
        <begin position="393"/>
        <end position="413"/>
    </location>
</feature>
<feature type="transmembrane region" description="Helical" evidence="3">
    <location>
        <begin position="435"/>
        <end position="455"/>
    </location>
</feature>
<protein>
    <recommendedName>
        <fullName>NADH-ubiquinone oxidoreductase chain 4</fullName>
        <ecNumber evidence="1">7.1.1.2</ecNumber>
    </recommendedName>
    <alternativeName>
        <fullName>NADH dehydrogenase subunit 4</fullName>
    </alternativeName>
</protein>
<gene>
    <name type="primary">MT-ND4</name>
    <name type="synonym">MTND4</name>
    <name type="synonym">NADH4</name>
    <name type="synonym">ND4</name>
</gene>
<reference key="1">
    <citation type="journal article" date="1996" name="Genomics">
        <title>Complete nucleotide sequences of the domestic cat (Felis catus) mitochondrial genome and a transposed mtDNA tandem repeat (Numt) in the nuclear genome.</title>
        <authorList>
            <person name="Lopez J.V."/>
            <person name="Cevario S."/>
            <person name="O'Brien S.J."/>
        </authorList>
    </citation>
    <scope>NUCLEOTIDE SEQUENCE [LARGE SCALE GENOMIC DNA]</scope>
    <source>
        <strain evidence="5">Abyssinian</strain>
        <tissue>Blood</tissue>
    </source>
</reference>
<sequence length="459" mass="51497">MLKIIIPTAMLMPMTCLSKPNMIWINSTTYSLLISLISLSYLNQLGGHSLNFSLLFFSDSLSAPLLVLTTWLLPLMLMASQSHLSKETPSRKKLYITMLTLLQLLLIMTFTATELIMFYILFEATLIPTLIIITRWGDQTERLNAGLYFLFYTLVGSLPLLVALLYIQNTTGTLNFLIIQYWAKPISTTWSNIFLWLACMMAFMVKMPLYGLHLWLPKAHVEAPIAGSMVLAAVLLKLGGYGMMRITVLLNPATNQMAYPFMMLSLWGMVMTSSICLRQTDLKSLIAYSSVSHMALVIVAVLIQTPWSYMGATALMIAHGLTSSMLFCLANSNYERVHSRTMILARGLQTILPLMAAWWLLASLANLALPPTINLIGELFVVMASFSWSNMTIILMGTNIIITALYSLYMLIMTQRGKYTHHIKNINPSFTRENALMALHLLPLLLLSLNPKIVLGPIY</sequence>